<dbReference type="EC" id="1.15.1.1"/>
<dbReference type="EMBL" id="X82172">
    <property type="protein sequence ID" value="CAA57658.1"/>
    <property type="molecule type" value="Genomic_DNA"/>
</dbReference>
<dbReference type="EMBL" id="X82171">
    <property type="protein sequence ID" value="CAA57657.1"/>
    <property type="molecule type" value="mRNA"/>
</dbReference>
<dbReference type="PIR" id="S48831">
    <property type="entry name" value="S48831"/>
</dbReference>
<dbReference type="PIR" id="S55346">
    <property type="entry name" value="S48832"/>
</dbReference>
<dbReference type="SMR" id="P41981"/>
<dbReference type="STRING" id="6282.P41981"/>
<dbReference type="EnsemblMetazoa" id="OVOC1096a.1">
    <property type="protein sequence ID" value="OVOC1096a.1"/>
    <property type="gene ID" value="WBGene00237905"/>
</dbReference>
<dbReference type="HOGENOM" id="CLU_031625_2_1_1"/>
<dbReference type="Proteomes" id="UP000024404">
    <property type="component" value="Unassembled WGS sequence"/>
</dbReference>
<dbReference type="GO" id="GO:0005759">
    <property type="term" value="C:mitochondrial matrix"/>
    <property type="evidence" value="ECO:0007669"/>
    <property type="project" value="UniProtKB-SubCell"/>
</dbReference>
<dbReference type="GO" id="GO:0030145">
    <property type="term" value="F:manganese ion binding"/>
    <property type="evidence" value="ECO:0007669"/>
    <property type="project" value="TreeGrafter"/>
</dbReference>
<dbReference type="GO" id="GO:0004784">
    <property type="term" value="F:superoxide dismutase activity"/>
    <property type="evidence" value="ECO:0007669"/>
    <property type="project" value="UniProtKB-EC"/>
</dbReference>
<dbReference type="FunFam" id="1.10.287.990:FF:000001">
    <property type="entry name" value="Superoxide dismutase"/>
    <property type="match status" value="1"/>
</dbReference>
<dbReference type="FunFam" id="3.55.40.20:FF:000004">
    <property type="entry name" value="Superoxide dismutase [Fe]"/>
    <property type="match status" value="1"/>
</dbReference>
<dbReference type="Gene3D" id="1.10.287.990">
    <property type="entry name" value="Fe,Mn superoxide dismutase (SOD) domain"/>
    <property type="match status" value="1"/>
</dbReference>
<dbReference type="Gene3D" id="3.55.40.20">
    <property type="entry name" value="Iron/manganese superoxide dismutase, C-terminal domain"/>
    <property type="match status" value="1"/>
</dbReference>
<dbReference type="InterPro" id="IPR050265">
    <property type="entry name" value="Fe/Mn_Superoxide_Dismutase"/>
</dbReference>
<dbReference type="InterPro" id="IPR001189">
    <property type="entry name" value="Mn/Fe_SOD"/>
</dbReference>
<dbReference type="InterPro" id="IPR019833">
    <property type="entry name" value="Mn/Fe_SOD_BS"/>
</dbReference>
<dbReference type="InterPro" id="IPR019832">
    <property type="entry name" value="Mn/Fe_SOD_C"/>
</dbReference>
<dbReference type="InterPro" id="IPR019831">
    <property type="entry name" value="Mn/Fe_SOD_N"/>
</dbReference>
<dbReference type="InterPro" id="IPR036324">
    <property type="entry name" value="Mn/Fe_SOD_N_sf"/>
</dbReference>
<dbReference type="InterPro" id="IPR036314">
    <property type="entry name" value="SOD_C_sf"/>
</dbReference>
<dbReference type="PANTHER" id="PTHR11404">
    <property type="entry name" value="SUPEROXIDE DISMUTASE 2"/>
    <property type="match status" value="1"/>
</dbReference>
<dbReference type="PANTHER" id="PTHR11404:SF6">
    <property type="entry name" value="SUPEROXIDE DISMUTASE [MN], MITOCHONDRIAL"/>
    <property type="match status" value="1"/>
</dbReference>
<dbReference type="Pfam" id="PF02777">
    <property type="entry name" value="Sod_Fe_C"/>
    <property type="match status" value="1"/>
</dbReference>
<dbReference type="Pfam" id="PF00081">
    <property type="entry name" value="Sod_Fe_N"/>
    <property type="match status" value="1"/>
</dbReference>
<dbReference type="PIRSF" id="PIRSF000349">
    <property type="entry name" value="SODismutase"/>
    <property type="match status" value="1"/>
</dbReference>
<dbReference type="PRINTS" id="PR01703">
    <property type="entry name" value="MNSODISMTASE"/>
</dbReference>
<dbReference type="SUPFAM" id="SSF54719">
    <property type="entry name" value="Fe,Mn superoxide dismutase (SOD), C-terminal domain"/>
    <property type="match status" value="1"/>
</dbReference>
<dbReference type="SUPFAM" id="SSF46609">
    <property type="entry name" value="Fe,Mn superoxide dismutase (SOD), N-terminal domain"/>
    <property type="match status" value="1"/>
</dbReference>
<dbReference type="PROSITE" id="PS00088">
    <property type="entry name" value="SOD_MN"/>
    <property type="match status" value="1"/>
</dbReference>
<evidence type="ECO:0000250" key="1"/>
<evidence type="ECO:0000305" key="2"/>
<keyword id="KW-0464">Manganese</keyword>
<keyword id="KW-0479">Metal-binding</keyword>
<keyword id="KW-0496">Mitochondrion</keyword>
<keyword id="KW-0560">Oxidoreductase</keyword>
<keyword id="KW-1185">Reference proteome</keyword>
<keyword id="KW-0809">Transit peptide</keyword>
<proteinExistence type="evidence at transcript level"/>
<feature type="transit peptide" description="Mitochondrion" evidence="1">
    <location>
        <begin position="1"/>
        <end position="24"/>
    </location>
</feature>
<feature type="chain" id="PRO_0000032878" description="Superoxide dismutase [Mn], mitochondrial">
    <location>
        <begin position="25"/>
        <end position="223"/>
    </location>
</feature>
<feature type="binding site" evidence="1">
    <location>
        <position position="50"/>
    </location>
    <ligand>
        <name>Mn(2+)</name>
        <dbReference type="ChEBI" id="CHEBI:29035"/>
    </ligand>
</feature>
<feature type="binding site" evidence="1">
    <location>
        <position position="98"/>
    </location>
    <ligand>
        <name>Mn(2+)</name>
        <dbReference type="ChEBI" id="CHEBI:29035"/>
    </ligand>
</feature>
<feature type="binding site" evidence="1">
    <location>
        <position position="184"/>
    </location>
    <ligand>
        <name>Mn(2+)</name>
        <dbReference type="ChEBI" id="CHEBI:29035"/>
    </ligand>
</feature>
<feature type="binding site" evidence="1">
    <location>
        <position position="188"/>
    </location>
    <ligand>
        <name>Mn(2+)</name>
        <dbReference type="ChEBI" id="CHEBI:29035"/>
    </ligand>
</feature>
<feature type="sequence variant">
    <original>V</original>
    <variation>I</variation>
    <location>
        <position position="7"/>
    </location>
</feature>
<comment type="function">
    <text>Destroys superoxide anion radicals which are normally produced within the cells and which are toxic to biological systems.</text>
</comment>
<comment type="catalytic activity">
    <reaction>
        <text>2 superoxide + 2 H(+) = H2O2 + O2</text>
        <dbReference type="Rhea" id="RHEA:20696"/>
        <dbReference type="ChEBI" id="CHEBI:15378"/>
        <dbReference type="ChEBI" id="CHEBI:15379"/>
        <dbReference type="ChEBI" id="CHEBI:16240"/>
        <dbReference type="ChEBI" id="CHEBI:18421"/>
        <dbReference type="EC" id="1.15.1.1"/>
    </reaction>
</comment>
<comment type="cofactor">
    <cofactor evidence="1">
        <name>Mn(2+)</name>
        <dbReference type="ChEBI" id="CHEBI:29035"/>
    </cofactor>
    <text evidence="1">Binds 1 Mn(2+) ion per subunit.</text>
</comment>
<comment type="subunit">
    <text evidence="1">Homotetramer.</text>
</comment>
<comment type="subcellular location">
    <subcellularLocation>
        <location>Mitochondrion matrix</location>
    </subcellularLocation>
</comment>
<comment type="similarity">
    <text evidence="2">Belongs to the iron/manganese superoxide dismutase family.</text>
</comment>
<accession>P41981</accession>
<gene>
    <name type="primary">sod-2</name>
</gene>
<organism>
    <name type="scientific">Onchocerca volvulus</name>
    <dbReference type="NCBI Taxonomy" id="6282"/>
    <lineage>
        <taxon>Eukaryota</taxon>
        <taxon>Metazoa</taxon>
        <taxon>Ecdysozoa</taxon>
        <taxon>Nematoda</taxon>
        <taxon>Chromadorea</taxon>
        <taxon>Rhabditida</taxon>
        <taxon>Spirurina</taxon>
        <taxon>Spiruromorpha</taxon>
        <taxon>Filarioidea</taxon>
        <taxon>Onchocercidae</taxon>
        <taxon>Onchocerca</taxon>
    </lineage>
</organism>
<name>SODM_ONCVO</name>
<reference key="1">
    <citation type="journal article" date="1995" name="Biochem. J.">
        <title>Characterization of the manganese superoxide dismutase cDNA and gene from the human parasite Onchocerca volvulus.</title>
        <authorList>
            <person name="Henkle-Duehrsen K."/>
            <person name="Tawe W."/>
            <person name="Warnecke C."/>
            <person name="Walter R.D."/>
        </authorList>
    </citation>
    <scope>NUCLEOTIDE SEQUENCE [GENOMIC DNA / MRNA]</scope>
</reference>
<sequence length="223" mass="25021">MNLIIGVAGRLLVGKNYCLNTQRLKHVLPDLPYDYGALEPILSAEIMQVHHGKHHAAYVNALNQAEEKVKEALAKGDTQAAVAGTKLMNFNTGGHINHTLFWEGLTAVKNSGEPNSELMTAIKKDFGSLETMIDKLNAKTIAIQGSGWGWLAYDKEMKRLQLACCPNQDLLEPTTGLIPLFCIDVWEHAYYLQYKNLRPDFVKAIWKIANWKIISDRYIKARG</sequence>
<protein>
    <recommendedName>
        <fullName>Superoxide dismutase [Mn], mitochondrial</fullName>
        <ecNumber>1.15.1.1</ecNumber>
    </recommendedName>
</protein>